<evidence type="ECO:0000255" key="1">
    <source>
        <dbReference type="HAMAP-Rule" id="MF_00238"/>
    </source>
</evidence>
<sequence length="220" mass="24324">MKKIQIAIDGPASSGKSTVAKIIARNLGLIYLDTGAMYRVATLVALQEKTEDASKIIQFIENHPISFANGKNGQEVLVGLDNVTEVIRTNEVTNAVSKISAMMEIREFMVAEQQRIAQKGGIIMDGRDIGTVVLPQANLKIFLVASVDERAERRYKENLSKGIPTDLDRLKVEIAERDRKDSTRAVSPLKQAEDAILLDSTGKTIKEIVQFIEEKAKKLM</sequence>
<accession>A2RJ85</accession>
<protein>
    <recommendedName>
        <fullName evidence="1">Cytidylate kinase</fullName>
        <shortName evidence="1">CK</shortName>
        <ecNumber evidence="1">2.7.4.25</ecNumber>
    </recommendedName>
    <alternativeName>
        <fullName evidence="1">Cytidine monophosphate kinase</fullName>
        <shortName evidence="1">CMP kinase</shortName>
    </alternativeName>
</protein>
<dbReference type="EC" id="2.7.4.25" evidence="1"/>
<dbReference type="EMBL" id="AM406671">
    <property type="protein sequence ID" value="CAL97336.1"/>
    <property type="molecule type" value="Genomic_DNA"/>
</dbReference>
<dbReference type="RefSeq" id="WP_011834720.1">
    <property type="nucleotide sequence ID" value="NC_009004.1"/>
</dbReference>
<dbReference type="SMR" id="A2RJ85"/>
<dbReference type="STRING" id="416870.llmg_0732"/>
<dbReference type="KEGG" id="llm:llmg_0732"/>
<dbReference type="eggNOG" id="COG0283">
    <property type="taxonomic scope" value="Bacteria"/>
</dbReference>
<dbReference type="HOGENOM" id="CLU_079959_0_2_9"/>
<dbReference type="OrthoDB" id="9807434at2"/>
<dbReference type="PhylomeDB" id="A2RJ85"/>
<dbReference type="Proteomes" id="UP000000364">
    <property type="component" value="Chromosome"/>
</dbReference>
<dbReference type="GO" id="GO:0005829">
    <property type="term" value="C:cytosol"/>
    <property type="evidence" value="ECO:0007669"/>
    <property type="project" value="TreeGrafter"/>
</dbReference>
<dbReference type="GO" id="GO:0005524">
    <property type="term" value="F:ATP binding"/>
    <property type="evidence" value="ECO:0007669"/>
    <property type="project" value="UniProtKB-UniRule"/>
</dbReference>
<dbReference type="GO" id="GO:0036430">
    <property type="term" value="F:CMP kinase activity"/>
    <property type="evidence" value="ECO:0007669"/>
    <property type="project" value="RHEA"/>
</dbReference>
<dbReference type="GO" id="GO:0036431">
    <property type="term" value="F:dCMP kinase activity"/>
    <property type="evidence" value="ECO:0007669"/>
    <property type="project" value="RHEA"/>
</dbReference>
<dbReference type="GO" id="GO:0015949">
    <property type="term" value="P:nucleobase-containing small molecule interconversion"/>
    <property type="evidence" value="ECO:0007669"/>
    <property type="project" value="TreeGrafter"/>
</dbReference>
<dbReference type="GO" id="GO:0006220">
    <property type="term" value="P:pyrimidine nucleotide metabolic process"/>
    <property type="evidence" value="ECO:0007669"/>
    <property type="project" value="UniProtKB-UniRule"/>
</dbReference>
<dbReference type="CDD" id="cd02020">
    <property type="entry name" value="CMPK"/>
    <property type="match status" value="1"/>
</dbReference>
<dbReference type="Gene3D" id="3.40.50.300">
    <property type="entry name" value="P-loop containing nucleotide triphosphate hydrolases"/>
    <property type="match status" value="1"/>
</dbReference>
<dbReference type="HAMAP" id="MF_00238">
    <property type="entry name" value="Cytidyl_kinase_type1"/>
    <property type="match status" value="1"/>
</dbReference>
<dbReference type="InterPro" id="IPR003136">
    <property type="entry name" value="Cytidylate_kin"/>
</dbReference>
<dbReference type="InterPro" id="IPR011994">
    <property type="entry name" value="Cytidylate_kinase_dom"/>
</dbReference>
<dbReference type="InterPro" id="IPR027417">
    <property type="entry name" value="P-loop_NTPase"/>
</dbReference>
<dbReference type="NCBIfam" id="TIGR00017">
    <property type="entry name" value="cmk"/>
    <property type="match status" value="1"/>
</dbReference>
<dbReference type="PANTHER" id="PTHR21299:SF2">
    <property type="entry name" value="CYTIDYLATE KINASE"/>
    <property type="match status" value="1"/>
</dbReference>
<dbReference type="PANTHER" id="PTHR21299">
    <property type="entry name" value="CYTIDYLATE KINASE/PANTOATE-BETA-ALANINE LIGASE"/>
    <property type="match status" value="1"/>
</dbReference>
<dbReference type="Pfam" id="PF02224">
    <property type="entry name" value="Cytidylate_kin"/>
    <property type="match status" value="1"/>
</dbReference>
<dbReference type="SUPFAM" id="SSF52540">
    <property type="entry name" value="P-loop containing nucleoside triphosphate hydrolases"/>
    <property type="match status" value="1"/>
</dbReference>
<organism>
    <name type="scientific">Lactococcus lactis subsp. cremoris (strain MG1363)</name>
    <dbReference type="NCBI Taxonomy" id="416870"/>
    <lineage>
        <taxon>Bacteria</taxon>
        <taxon>Bacillati</taxon>
        <taxon>Bacillota</taxon>
        <taxon>Bacilli</taxon>
        <taxon>Lactobacillales</taxon>
        <taxon>Streptococcaceae</taxon>
        <taxon>Lactococcus</taxon>
        <taxon>Lactococcus cremoris subsp. cremoris</taxon>
    </lineage>
</organism>
<comment type="catalytic activity">
    <reaction evidence="1">
        <text>CMP + ATP = CDP + ADP</text>
        <dbReference type="Rhea" id="RHEA:11600"/>
        <dbReference type="ChEBI" id="CHEBI:30616"/>
        <dbReference type="ChEBI" id="CHEBI:58069"/>
        <dbReference type="ChEBI" id="CHEBI:60377"/>
        <dbReference type="ChEBI" id="CHEBI:456216"/>
        <dbReference type="EC" id="2.7.4.25"/>
    </reaction>
</comment>
<comment type="catalytic activity">
    <reaction evidence="1">
        <text>dCMP + ATP = dCDP + ADP</text>
        <dbReference type="Rhea" id="RHEA:25094"/>
        <dbReference type="ChEBI" id="CHEBI:30616"/>
        <dbReference type="ChEBI" id="CHEBI:57566"/>
        <dbReference type="ChEBI" id="CHEBI:58593"/>
        <dbReference type="ChEBI" id="CHEBI:456216"/>
        <dbReference type="EC" id="2.7.4.25"/>
    </reaction>
</comment>
<comment type="subcellular location">
    <subcellularLocation>
        <location evidence="1">Cytoplasm</location>
    </subcellularLocation>
</comment>
<comment type="similarity">
    <text evidence="1">Belongs to the cytidylate kinase family. Type 1 subfamily.</text>
</comment>
<reference key="1">
    <citation type="journal article" date="2007" name="J. Bacteriol.">
        <title>The complete genome sequence of the lactic acid bacterial paradigm Lactococcus lactis subsp. cremoris MG1363.</title>
        <authorList>
            <person name="Wegmann U."/>
            <person name="O'Connell-Motherway M."/>
            <person name="Zomer A."/>
            <person name="Buist G."/>
            <person name="Shearman C."/>
            <person name="Canchaya C."/>
            <person name="Ventura M."/>
            <person name="Goesmann A."/>
            <person name="Gasson M.J."/>
            <person name="Kuipers O.P."/>
            <person name="van Sinderen D."/>
            <person name="Kok J."/>
        </authorList>
    </citation>
    <scope>NUCLEOTIDE SEQUENCE [LARGE SCALE GENOMIC DNA]</scope>
    <source>
        <strain>MG1363</strain>
    </source>
</reference>
<feature type="chain" id="PRO_1000048226" description="Cytidylate kinase">
    <location>
        <begin position="1"/>
        <end position="220"/>
    </location>
</feature>
<feature type="binding site" evidence="1">
    <location>
        <begin position="10"/>
        <end position="18"/>
    </location>
    <ligand>
        <name>ATP</name>
        <dbReference type="ChEBI" id="CHEBI:30616"/>
    </ligand>
</feature>
<proteinExistence type="inferred from homology"/>
<keyword id="KW-0067">ATP-binding</keyword>
<keyword id="KW-0963">Cytoplasm</keyword>
<keyword id="KW-0418">Kinase</keyword>
<keyword id="KW-0547">Nucleotide-binding</keyword>
<keyword id="KW-0808">Transferase</keyword>
<name>KCY_LACLM</name>
<gene>
    <name evidence="1" type="primary">cmk</name>
    <name type="ordered locus">llmg_0732</name>
</gene>